<comment type="function">
    <text evidence="1">Cleaves peptides in various proteins in a process that requires ATP hydrolysis. Has a chymotrypsin-like activity. Plays a major role in the degradation of misfolded proteins.</text>
</comment>
<comment type="catalytic activity">
    <reaction evidence="1">
        <text>Hydrolysis of proteins to small peptides in the presence of ATP and magnesium. alpha-casein is the usual test substrate. In the absence of ATP, only oligopeptides shorter than five residues are hydrolyzed (such as succinyl-Leu-Tyr-|-NHMec, and Leu-Tyr-Leu-|-Tyr-Trp, in which cleavage of the -Tyr-|-Leu- and -Tyr-|-Trp bonds also occurs).</text>
        <dbReference type="EC" id="3.4.21.92"/>
    </reaction>
</comment>
<comment type="subunit">
    <text evidence="1">Fourteen ClpP subunits assemble into 2 heptameric rings which stack back to back to give a disk-like structure with a central cavity, resembling the structure of eukaryotic proteasomes.</text>
</comment>
<comment type="subcellular location">
    <subcellularLocation>
        <location evidence="1">Cytoplasm</location>
    </subcellularLocation>
</comment>
<comment type="similarity">
    <text evidence="1">Belongs to the peptidase S14 family.</text>
</comment>
<gene>
    <name evidence="1" type="primary">clpP</name>
    <name type="ordered locus">lpp1829</name>
</gene>
<evidence type="ECO:0000255" key="1">
    <source>
        <dbReference type="HAMAP-Rule" id="MF_00444"/>
    </source>
</evidence>
<reference key="1">
    <citation type="journal article" date="2004" name="Nat. Genet.">
        <title>Evidence in the Legionella pneumophila genome for exploitation of host cell functions and high genome plasticity.</title>
        <authorList>
            <person name="Cazalet C."/>
            <person name="Rusniok C."/>
            <person name="Brueggemann H."/>
            <person name="Zidane N."/>
            <person name="Magnier A."/>
            <person name="Ma L."/>
            <person name="Tichit M."/>
            <person name="Jarraud S."/>
            <person name="Bouchier C."/>
            <person name="Vandenesch F."/>
            <person name="Kunst F."/>
            <person name="Etienne J."/>
            <person name="Glaser P."/>
            <person name="Buchrieser C."/>
        </authorList>
    </citation>
    <scope>NUCLEOTIDE SEQUENCE [LARGE SCALE GENOMIC DNA]</scope>
    <source>
        <strain>Paris</strain>
    </source>
</reference>
<protein>
    <recommendedName>
        <fullName evidence="1">ATP-dependent Clp protease proteolytic subunit</fullName>
        <ecNumber evidence="1">3.4.21.92</ecNumber>
    </recommendedName>
    <alternativeName>
        <fullName evidence="1">Endopeptidase Clp</fullName>
    </alternativeName>
</protein>
<feature type="chain" id="PRO_0000179576" description="ATP-dependent Clp protease proteolytic subunit">
    <location>
        <begin position="1"/>
        <end position="214"/>
    </location>
</feature>
<feature type="active site" description="Nucleophile" evidence="1">
    <location>
        <position position="110"/>
    </location>
</feature>
<feature type="active site" evidence="1">
    <location>
        <position position="135"/>
    </location>
</feature>
<sequence>MPGYSDNIIRNASGLIPMVIEQTSRGERSYDIYSRLLKERIIFLLGEVEDHMANLVVAQLLFLESENPEKDISLYINSPGGVVTAGLAIYDTMQFIKPDVSTLCIGQAASAAALLLCAGAEGKRFCLPNSRVMIHQPLGGYRGQATDIEIHARETLAVRERLNNIMAKHTKKTPDQIMRDTERDNFMSATQAMEYGLIDKVLYDRQVAGHSTDL</sequence>
<name>CLPP_LEGPA</name>
<keyword id="KW-0963">Cytoplasm</keyword>
<keyword id="KW-0378">Hydrolase</keyword>
<keyword id="KW-0645">Protease</keyword>
<keyword id="KW-0720">Serine protease</keyword>
<dbReference type="EC" id="3.4.21.92" evidence="1"/>
<dbReference type="EMBL" id="CR628336">
    <property type="protein sequence ID" value="CAH12981.1"/>
    <property type="molecule type" value="Genomic_DNA"/>
</dbReference>
<dbReference type="RefSeq" id="WP_010947585.1">
    <property type="nucleotide sequence ID" value="NC_006368.1"/>
</dbReference>
<dbReference type="SMR" id="Q5X451"/>
<dbReference type="MEROPS" id="S14.001"/>
<dbReference type="GeneID" id="57035853"/>
<dbReference type="KEGG" id="lpp:lpp1829"/>
<dbReference type="LegioList" id="lpp1829"/>
<dbReference type="HOGENOM" id="CLU_058707_3_2_6"/>
<dbReference type="GO" id="GO:0005737">
    <property type="term" value="C:cytoplasm"/>
    <property type="evidence" value="ECO:0007669"/>
    <property type="project" value="UniProtKB-SubCell"/>
</dbReference>
<dbReference type="GO" id="GO:0009368">
    <property type="term" value="C:endopeptidase Clp complex"/>
    <property type="evidence" value="ECO:0007669"/>
    <property type="project" value="TreeGrafter"/>
</dbReference>
<dbReference type="GO" id="GO:0004176">
    <property type="term" value="F:ATP-dependent peptidase activity"/>
    <property type="evidence" value="ECO:0007669"/>
    <property type="project" value="InterPro"/>
</dbReference>
<dbReference type="GO" id="GO:0051117">
    <property type="term" value="F:ATPase binding"/>
    <property type="evidence" value="ECO:0007669"/>
    <property type="project" value="TreeGrafter"/>
</dbReference>
<dbReference type="GO" id="GO:0004252">
    <property type="term" value="F:serine-type endopeptidase activity"/>
    <property type="evidence" value="ECO:0007669"/>
    <property type="project" value="UniProtKB-UniRule"/>
</dbReference>
<dbReference type="GO" id="GO:0006515">
    <property type="term" value="P:protein quality control for misfolded or incompletely synthesized proteins"/>
    <property type="evidence" value="ECO:0007669"/>
    <property type="project" value="TreeGrafter"/>
</dbReference>
<dbReference type="CDD" id="cd07017">
    <property type="entry name" value="S14_ClpP_2"/>
    <property type="match status" value="1"/>
</dbReference>
<dbReference type="FunFam" id="3.90.226.10:FF:000001">
    <property type="entry name" value="ATP-dependent Clp protease proteolytic subunit"/>
    <property type="match status" value="1"/>
</dbReference>
<dbReference type="Gene3D" id="3.90.226.10">
    <property type="entry name" value="2-enoyl-CoA Hydratase, Chain A, domain 1"/>
    <property type="match status" value="1"/>
</dbReference>
<dbReference type="HAMAP" id="MF_00444">
    <property type="entry name" value="ClpP"/>
    <property type="match status" value="1"/>
</dbReference>
<dbReference type="InterPro" id="IPR001907">
    <property type="entry name" value="ClpP"/>
</dbReference>
<dbReference type="InterPro" id="IPR029045">
    <property type="entry name" value="ClpP/crotonase-like_dom_sf"/>
</dbReference>
<dbReference type="InterPro" id="IPR023562">
    <property type="entry name" value="ClpP/TepA"/>
</dbReference>
<dbReference type="InterPro" id="IPR033135">
    <property type="entry name" value="ClpP_His_AS"/>
</dbReference>
<dbReference type="InterPro" id="IPR018215">
    <property type="entry name" value="ClpP_Ser_AS"/>
</dbReference>
<dbReference type="NCBIfam" id="TIGR00493">
    <property type="entry name" value="clpP"/>
    <property type="match status" value="1"/>
</dbReference>
<dbReference type="NCBIfam" id="NF001368">
    <property type="entry name" value="PRK00277.1"/>
    <property type="match status" value="1"/>
</dbReference>
<dbReference type="NCBIfam" id="NF009205">
    <property type="entry name" value="PRK12553.1"/>
    <property type="match status" value="1"/>
</dbReference>
<dbReference type="PANTHER" id="PTHR10381">
    <property type="entry name" value="ATP-DEPENDENT CLP PROTEASE PROTEOLYTIC SUBUNIT"/>
    <property type="match status" value="1"/>
</dbReference>
<dbReference type="PANTHER" id="PTHR10381:SF70">
    <property type="entry name" value="ATP-DEPENDENT CLP PROTEASE PROTEOLYTIC SUBUNIT"/>
    <property type="match status" value="1"/>
</dbReference>
<dbReference type="Pfam" id="PF00574">
    <property type="entry name" value="CLP_protease"/>
    <property type="match status" value="1"/>
</dbReference>
<dbReference type="PRINTS" id="PR00127">
    <property type="entry name" value="CLPPROTEASEP"/>
</dbReference>
<dbReference type="SUPFAM" id="SSF52096">
    <property type="entry name" value="ClpP/crotonase"/>
    <property type="match status" value="1"/>
</dbReference>
<dbReference type="PROSITE" id="PS00382">
    <property type="entry name" value="CLP_PROTEASE_HIS"/>
    <property type="match status" value="1"/>
</dbReference>
<dbReference type="PROSITE" id="PS00381">
    <property type="entry name" value="CLP_PROTEASE_SER"/>
    <property type="match status" value="1"/>
</dbReference>
<accession>Q5X451</accession>
<proteinExistence type="inferred from homology"/>
<organism>
    <name type="scientific">Legionella pneumophila (strain Paris)</name>
    <dbReference type="NCBI Taxonomy" id="297246"/>
    <lineage>
        <taxon>Bacteria</taxon>
        <taxon>Pseudomonadati</taxon>
        <taxon>Pseudomonadota</taxon>
        <taxon>Gammaproteobacteria</taxon>
        <taxon>Legionellales</taxon>
        <taxon>Legionellaceae</taxon>
        <taxon>Legionella</taxon>
    </lineage>
</organism>